<organism>
    <name type="scientific">Salmonella schwarzengrund (strain CVM19633)</name>
    <dbReference type="NCBI Taxonomy" id="439843"/>
    <lineage>
        <taxon>Bacteria</taxon>
        <taxon>Pseudomonadati</taxon>
        <taxon>Pseudomonadota</taxon>
        <taxon>Gammaproteobacteria</taxon>
        <taxon>Enterobacterales</taxon>
        <taxon>Enterobacteriaceae</taxon>
        <taxon>Salmonella</taxon>
    </lineage>
</organism>
<evidence type="ECO:0000255" key="1">
    <source>
        <dbReference type="HAMAP-Rule" id="MF_01178"/>
    </source>
</evidence>
<keyword id="KW-0010">Activator</keyword>
<keyword id="KW-0175">Coiled coil</keyword>
<keyword id="KW-0963">Cytoplasm</keyword>
<keyword id="KW-0804">Transcription</keyword>
<keyword id="KW-0805">Transcription regulation</keyword>
<accession>B4TZ87</accession>
<name>CRL_SALSV</name>
<proteinExistence type="inferred from homology"/>
<reference key="1">
    <citation type="journal article" date="2011" name="J. Bacteriol.">
        <title>Comparative genomics of 28 Salmonella enterica isolates: evidence for CRISPR-mediated adaptive sublineage evolution.</title>
        <authorList>
            <person name="Fricke W.F."/>
            <person name="Mammel M.K."/>
            <person name="McDermott P.F."/>
            <person name="Tartera C."/>
            <person name="White D.G."/>
            <person name="Leclerc J.E."/>
            <person name="Ravel J."/>
            <person name="Cebula T.A."/>
        </authorList>
    </citation>
    <scope>NUCLEOTIDE SEQUENCE [LARGE SCALE GENOMIC DNA]</scope>
    <source>
        <strain>CVM19633</strain>
    </source>
</reference>
<protein>
    <recommendedName>
        <fullName evidence="1">Sigma factor-binding protein Crl</fullName>
    </recommendedName>
</protein>
<feature type="chain" id="PRO_1000138150" description="Sigma factor-binding protein Crl">
    <location>
        <begin position="1"/>
        <end position="133"/>
    </location>
</feature>
<feature type="region of interest" description="Essential for activity" evidence="1">
    <location>
        <begin position="99"/>
        <end position="122"/>
    </location>
</feature>
<feature type="coiled-coil region" evidence="1">
    <location>
        <begin position="90"/>
        <end position="111"/>
    </location>
</feature>
<comment type="function">
    <text evidence="1">Binds to the sigma-S subunit of RNA polymerase, activating expression of sigma-S-regulated genes. Stimulates RNA polymerase holoenzyme formation and may bind to several other sigma factors, such as sigma-70 and sigma-32.</text>
</comment>
<comment type="subcellular location">
    <subcellularLocation>
        <location evidence="1">Cytoplasm</location>
    </subcellularLocation>
</comment>
<comment type="similarity">
    <text evidence="1">Belongs to the Crl family.</text>
</comment>
<dbReference type="EMBL" id="CP001127">
    <property type="protein sequence ID" value="ACF92955.1"/>
    <property type="molecule type" value="Genomic_DNA"/>
</dbReference>
<dbReference type="RefSeq" id="WP_000174695.1">
    <property type="nucleotide sequence ID" value="NC_011094.1"/>
</dbReference>
<dbReference type="SMR" id="B4TZ87"/>
<dbReference type="KEGG" id="sew:SeSA_A0368"/>
<dbReference type="HOGENOM" id="CLU_136773_0_0_6"/>
<dbReference type="Proteomes" id="UP000001865">
    <property type="component" value="Chromosome"/>
</dbReference>
<dbReference type="GO" id="GO:0005737">
    <property type="term" value="C:cytoplasm"/>
    <property type="evidence" value="ECO:0007669"/>
    <property type="project" value="UniProtKB-SubCell"/>
</dbReference>
<dbReference type="GO" id="GO:0045893">
    <property type="term" value="P:positive regulation of DNA-templated transcription"/>
    <property type="evidence" value="ECO:0007669"/>
    <property type="project" value="UniProtKB-UniRule"/>
</dbReference>
<dbReference type="Gene3D" id="3.30.310.230">
    <property type="entry name" value="Sigma factor-binding protein Crl monomer"/>
    <property type="match status" value="1"/>
</dbReference>
<dbReference type="HAMAP" id="MF_01178">
    <property type="entry name" value="Crl"/>
    <property type="match status" value="1"/>
</dbReference>
<dbReference type="InterPro" id="IPR009986">
    <property type="entry name" value="Tscrpt_reg_Crl"/>
</dbReference>
<dbReference type="InterPro" id="IPR038208">
    <property type="entry name" value="Tscrpt_reg_Crl_sf"/>
</dbReference>
<dbReference type="NCBIfam" id="NF008217">
    <property type="entry name" value="PRK10984.1"/>
    <property type="match status" value="1"/>
</dbReference>
<dbReference type="Pfam" id="PF07417">
    <property type="entry name" value="Crl"/>
    <property type="match status" value="1"/>
</dbReference>
<sequence>MTLPSGHPKSRLIKKFTALGPYIREGQCEDNRFFFDCLAVCVNVKPAPEKREFWGWWMELEAQEKRFTYRYQFGLFDKEGNWTAVSINETEVVERLEYTLREFHEKLRDLLISMELALEPSDDFNDEPVKLSA</sequence>
<gene>
    <name evidence="1" type="primary">crl</name>
    <name type="ordered locus">SeSA_A0368</name>
</gene>